<accession>P0DF27</accession>
<accession>P66698</accession>
<accession>Q9A085</accession>
<feature type="chain" id="PRO_0000411553" description="Ribose-5-phosphate isomerase A">
    <location>
        <begin position="1"/>
        <end position="227"/>
    </location>
</feature>
<feature type="active site" description="Proton acceptor" evidence="1">
    <location>
        <position position="104"/>
    </location>
</feature>
<feature type="binding site" evidence="1">
    <location>
        <begin position="26"/>
        <end position="29"/>
    </location>
    <ligand>
        <name>substrate</name>
    </ligand>
</feature>
<feature type="binding site" evidence="1">
    <location>
        <begin position="82"/>
        <end position="85"/>
    </location>
    <ligand>
        <name>substrate</name>
    </ligand>
</feature>
<feature type="binding site" evidence="1">
    <location>
        <begin position="95"/>
        <end position="98"/>
    </location>
    <ligand>
        <name>substrate</name>
    </ligand>
</feature>
<feature type="binding site" evidence="1">
    <location>
        <position position="122"/>
    </location>
    <ligand>
        <name>substrate</name>
    </ligand>
</feature>
<reference key="1">
    <citation type="journal article" date="2003" name="Genome Res.">
        <title>Genome sequence of an M3 strain of Streptococcus pyogenes reveals a large-scale genomic rearrangement in invasive strains and new insights into phage evolution.</title>
        <authorList>
            <person name="Nakagawa I."/>
            <person name="Kurokawa K."/>
            <person name="Yamashita A."/>
            <person name="Nakata M."/>
            <person name="Tomiyasu Y."/>
            <person name="Okahashi N."/>
            <person name="Kawabata S."/>
            <person name="Yamazaki K."/>
            <person name="Shiba T."/>
            <person name="Yasunaga T."/>
            <person name="Hayashi H."/>
            <person name="Hattori M."/>
            <person name="Hamada S."/>
        </authorList>
    </citation>
    <scope>NUCLEOTIDE SEQUENCE [LARGE SCALE GENOMIC DNA]</scope>
    <source>
        <strain>SSI-1</strain>
    </source>
</reference>
<keyword id="KW-0413">Isomerase</keyword>
<evidence type="ECO:0000255" key="1">
    <source>
        <dbReference type="HAMAP-Rule" id="MF_00170"/>
    </source>
</evidence>
<protein>
    <recommendedName>
        <fullName evidence="1">Ribose-5-phosphate isomerase A</fullName>
        <ecNumber evidence="1">5.3.1.6</ecNumber>
    </recommendedName>
    <alternativeName>
        <fullName evidence="1">Phosphoriboisomerase A</fullName>
        <shortName evidence="1">PRI</shortName>
    </alternativeName>
</protein>
<gene>
    <name evidence="1" type="primary">rpiA</name>
    <name type="ordered locus">SPs1245</name>
</gene>
<name>RPIA_STRPQ</name>
<comment type="function">
    <text evidence="1">Catalyzes the reversible conversion of ribose-5-phosphate to ribulose 5-phosphate.</text>
</comment>
<comment type="catalytic activity">
    <reaction evidence="1">
        <text>aldehydo-D-ribose 5-phosphate = D-ribulose 5-phosphate</text>
        <dbReference type="Rhea" id="RHEA:14657"/>
        <dbReference type="ChEBI" id="CHEBI:58121"/>
        <dbReference type="ChEBI" id="CHEBI:58273"/>
        <dbReference type="EC" id="5.3.1.6"/>
    </reaction>
</comment>
<comment type="pathway">
    <text evidence="1">Carbohydrate degradation; pentose phosphate pathway; D-ribose 5-phosphate from D-ribulose 5-phosphate (non-oxidative stage): step 1/1.</text>
</comment>
<comment type="subunit">
    <text evidence="1">Homodimer.</text>
</comment>
<comment type="similarity">
    <text evidence="1">Belongs to the ribose 5-phosphate isomerase family.</text>
</comment>
<proteinExistence type="inferred from homology"/>
<organism>
    <name type="scientific">Streptococcus pyogenes serotype M3 (strain SSI-1)</name>
    <dbReference type="NCBI Taxonomy" id="193567"/>
    <lineage>
        <taxon>Bacteria</taxon>
        <taxon>Bacillati</taxon>
        <taxon>Bacillota</taxon>
        <taxon>Bacilli</taxon>
        <taxon>Lactobacillales</taxon>
        <taxon>Streptococcaceae</taxon>
        <taxon>Streptococcus</taxon>
    </lineage>
</organism>
<dbReference type="EC" id="5.3.1.6" evidence="1"/>
<dbReference type="EMBL" id="BA000034">
    <property type="protein sequence ID" value="BAC64340.1"/>
    <property type="molecule type" value="Genomic_DNA"/>
</dbReference>
<dbReference type="RefSeq" id="WP_010922176.1">
    <property type="nucleotide sequence ID" value="NC_004606.1"/>
</dbReference>
<dbReference type="SMR" id="P0DF27"/>
<dbReference type="KEGG" id="sps:SPs1245"/>
<dbReference type="HOGENOM" id="CLU_056590_1_0_9"/>
<dbReference type="UniPathway" id="UPA00115">
    <property type="reaction ID" value="UER00412"/>
</dbReference>
<dbReference type="GO" id="GO:0004751">
    <property type="term" value="F:ribose-5-phosphate isomerase activity"/>
    <property type="evidence" value="ECO:0007669"/>
    <property type="project" value="UniProtKB-UniRule"/>
</dbReference>
<dbReference type="GO" id="GO:0009052">
    <property type="term" value="P:pentose-phosphate shunt, non-oxidative branch"/>
    <property type="evidence" value="ECO:0007669"/>
    <property type="project" value="UniProtKB-UniRule"/>
</dbReference>
<dbReference type="CDD" id="cd01398">
    <property type="entry name" value="RPI_A"/>
    <property type="match status" value="1"/>
</dbReference>
<dbReference type="FunFam" id="3.40.50.1360:FF:000001">
    <property type="entry name" value="Ribose-5-phosphate isomerase A"/>
    <property type="match status" value="1"/>
</dbReference>
<dbReference type="Gene3D" id="3.30.70.260">
    <property type="match status" value="1"/>
</dbReference>
<dbReference type="Gene3D" id="3.40.50.1360">
    <property type="match status" value="1"/>
</dbReference>
<dbReference type="HAMAP" id="MF_00170">
    <property type="entry name" value="Rib_5P_isom_A"/>
    <property type="match status" value="1"/>
</dbReference>
<dbReference type="InterPro" id="IPR037171">
    <property type="entry name" value="NagB/RpiA_transferase-like"/>
</dbReference>
<dbReference type="InterPro" id="IPR050262">
    <property type="entry name" value="Ribose-5P_isomerase"/>
</dbReference>
<dbReference type="InterPro" id="IPR020672">
    <property type="entry name" value="Ribose5P_isomerase_typA_subgr"/>
</dbReference>
<dbReference type="InterPro" id="IPR004788">
    <property type="entry name" value="Ribose5P_isomerase_type_A"/>
</dbReference>
<dbReference type="NCBIfam" id="NF001924">
    <property type="entry name" value="PRK00702.1"/>
    <property type="match status" value="1"/>
</dbReference>
<dbReference type="NCBIfam" id="TIGR00021">
    <property type="entry name" value="rpiA"/>
    <property type="match status" value="1"/>
</dbReference>
<dbReference type="PANTHER" id="PTHR43748">
    <property type="entry name" value="RIBOSE-5-PHOSPHATE ISOMERASE 3, CHLOROPLASTIC-RELATED"/>
    <property type="match status" value="1"/>
</dbReference>
<dbReference type="PANTHER" id="PTHR43748:SF3">
    <property type="entry name" value="RIBOSE-5-PHOSPHATE ISOMERASE 3, CHLOROPLASTIC-RELATED"/>
    <property type="match status" value="1"/>
</dbReference>
<dbReference type="Pfam" id="PF06026">
    <property type="entry name" value="Rib_5-P_isom_A"/>
    <property type="match status" value="1"/>
</dbReference>
<dbReference type="SUPFAM" id="SSF75445">
    <property type="entry name" value="D-ribose-5-phosphate isomerase (RpiA), lid domain"/>
    <property type="match status" value="1"/>
</dbReference>
<dbReference type="SUPFAM" id="SSF100950">
    <property type="entry name" value="NagB/RpiA/CoA transferase-like"/>
    <property type="match status" value="1"/>
</dbReference>
<sequence length="227" mass="24277">MEALKKIAGVTAAQYVTDGMTIGLGTGSTAYYFVEEIGRRVKQEGLQVVGVTTSSVTSKQAEVLGIPLKSIDDIDSIDLTVDGADEVDKNFNGIKGGGAALLMEKIVATPTKEYIWVVDASKMVEHLGAFKLPVEVVQYGADRLFRVFEKAGYKPSFRMKGDSRLVTDMQNYIIDLDLGCIKDPVAFGHLLDGTVGVVEHGLFNGMVDKVIVASKDGVTVLEAPTAG</sequence>